<evidence type="ECO:0000255" key="1">
    <source>
        <dbReference type="HAMAP-Rule" id="MF_00146"/>
    </source>
</evidence>
<evidence type="ECO:0000256" key="2">
    <source>
        <dbReference type="SAM" id="MobiDB-lite"/>
    </source>
</evidence>
<feature type="chain" id="PRO_1000203364" description="dCTP deaminase, dUMP-forming">
    <location>
        <begin position="1"/>
        <end position="189"/>
    </location>
</feature>
<feature type="region of interest" description="Disordered" evidence="2">
    <location>
        <begin position="163"/>
        <end position="189"/>
    </location>
</feature>
<feature type="active site" description="Proton donor/acceptor" evidence="1">
    <location>
        <position position="129"/>
    </location>
</feature>
<feature type="binding site" evidence="1">
    <location>
        <begin position="101"/>
        <end position="106"/>
    </location>
    <ligand>
        <name>dCTP</name>
        <dbReference type="ChEBI" id="CHEBI:61481"/>
    </ligand>
</feature>
<feature type="binding site" evidence="1">
    <location>
        <position position="119"/>
    </location>
    <ligand>
        <name>dCTP</name>
        <dbReference type="ChEBI" id="CHEBI:61481"/>
    </ligand>
</feature>
<feature type="binding site" evidence="1">
    <location>
        <begin position="127"/>
        <end position="129"/>
    </location>
    <ligand>
        <name>dCTP</name>
        <dbReference type="ChEBI" id="CHEBI:61481"/>
    </ligand>
</feature>
<feature type="binding site" evidence="1">
    <location>
        <position position="148"/>
    </location>
    <ligand>
        <name>dCTP</name>
        <dbReference type="ChEBI" id="CHEBI:61481"/>
    </ligand>
</feature>
<feature type="binding site" evidence="1">
    <location>
        <position position="162"/>
    </location>
    <ligand>
        <name>dCTP</name>
        <dbReference type="ChEBI" id="CHEBI:61481"/>
    </ligand>
</feature>
<feature type="binding site" evidence="1">
    <location>
        <position position="174"/>
    </location>
    <ligand>
        <name>dCTP</name>
        <dbReference type="ChEBI" id="CHEBI:61481"/>
    </ligand>
</feature>
<feature type="site" description="Important for bifunctional activity" evidence="1">
    <location>
        <begin position="116"/>
        <end position="117"/>
    </location>
</feature>
<sequence length="189" mass="20475">MLLSDRDIRAEISVGRLGIDPFDDSMVQPSSVDVRLDGLFRVFNNTRYTHIDPALRQDELTSLVEPAEGEPFVLHPGEFVLGSTLEVCSLPNDLAGRLEGKSSLGRLGLLTHSTAGFIDPGFSGHITLELSNVANLPITLWPGMKIGQLCLLKLSSAAEFPYGSSEAGSKYQGQRGPTPSKAYLNFNRS</sequence>
<protein>
    <recommendedName>
        <fullName evidence="1">dCTP deaminase, dUMP-forming</fullName>
        <ecNumber evidence="1">3.5.4.30</ecNumber>
    </recommendedName>
    <alternativeName>
        <fullName evidence="1">Bifunctional dCTP deaminase:dUTPase</fullName>
    </alternativeName>
    <alternativeName>
        <fullName evidence="1">DCD-DUT</fullName>
    </alternativeName>
</protein>
<name>DCDB_RHOE4</name>
<organism>
    <name type="scientific">Rhodococcus erythropolis (strain PR4 / NBRC 100887)</name>
    <dbReference type="NCBI Taxonomy" id="234621"/>
    <lineage>
        <taxon>Bacteria</taxon>
        <taxon>Bacillati</taxon>
        <taxon>Actinomycetota</taxon>
        <taxon>Actinomycetes</taxon>
        <taxon>Mycobacteriales</taxon>
        <taxon>Nocardiaceae</taxon>
        <taxon>Rhodococcus</taxon>
        <taxon>Rhodococcus erythropolis group</taxon>
    </lineage>
</organism>
<gene>
    <name evidence="1" type="primary">dcd</name>
    <name type="ordered locus">RER_12540</name>
</gene>
<dbReference type="EC" id="3.5.4.30" evidence="1"/>
<dbReference type="EMBL" id="AP008957">
    <property type="protein sequence ID" value="BAH31962.1"/>
    <property type="molecule type" value="Genomic_DNA"/>
</dbReference>
<dbReference type="RefSeq" id="WP_019747488.1">
    <property type="nucleotide sequence ID" value="NC_012490.1"/>
</dbReference>
<dbReference type="SMR" id="C0ZSY9"/>
<dbReference type="GeneID" id="93801783"/>
<dbReference type="KEGG" id="rer:RER_12540"/>
<dbReference type="eggNOG" id="COG0717">
    <property type="taxonomic scope" value="Bacteria"/>
</dbReference>
<dbReference type="HOGENOM" id="CLU_087476_2_0_11"/>
<dbReference type="UniPathway" id="UPA00610">
    <property type="reaction ID" value="UER00667"/>
</dbReference>
<dbReference type="Proteomes" id="UP000002204">
    <property type="component" value="Chromosome"/>
</dbReference>
<dbReference type="GO" id="GO:0033973">
    <property type="term" value="F:dCTP deaminase (dUMP-forming) activity"/>
    <property type="evidence" value="ECO:0007669"/>
    <property type="project" value="UniProtKB-UniRule"/>
</dbReference>
<dbReference type="GO" id="GO:0008829">
    <property type="term" value="F:dCTP deaminase activity"/>
    <property type="evidence" value="ECO:0007669"/>
    <property type="project" value="InterPro"/>
</dbReference>
<dbReference type="GO" id="GO:0000166">
    <property type="term" value="F:nucleotide binding"/>
    <property type="evidence" value="ECO:0007669"/>
    <property type="project" value="UniProtKB-KW"/>
</dbReference>
<dbReference type="GO" id="GO:0006226">
    <property type="term" value="P:dUMP biosynthetic process"/>
    <property type="evidence" value="ECO:0007669"/>
    <property type="project" value="UniProtKB-UniRule"/>
</dbReference>
<dbReference type="GO" id="GO:0006229">
    <property type="term" value="P:dUTP biosynthetic process"/>
    <property type="evidence" value="ECO:0007669"/>
    <property type="project" value="InterPro"/>
</dbReference>
<dbReference type="GO" id="GO:0015949">
    <property type="term" value="P:nucleobase-containing small molecule interconversion"/>
    <property type="evidence" value="ECO:0007669"/>
    <property type="project" value="TreeGrafter"/>
</dbReference>
<dbReference type="CDD" id="cd07557">
    <property type="entry name" value="trimeric_dUTPase"/>
    <property type="match status" value="1"/>
</dbReference>
<dbReference type="FunFam" id="2.70.40.10:FF:000005">
    <property type="entry name" value="dCTP deaminase, dUMP-forming"/>
    <property type="match status" value="1"/>
</dbReference>
<dbReference type="Gene3D" id="2.70.40.10">
    <property type="match status" value="1"/>
</dbReference>
<dbReference type="HAMAP" id="MF_00146">
    <property type="entry name" value="dCTP_deaminase"/>
    <property type="match status" value="1"/>
</dbReference>
<dbReference type="InterPro" id="IPR011962">
    <property type="entry name" value="dCTP_deaminase"/>
</dbReference>
<dbReference type="InterPro" id="IPR036157">
    <property type="entry name" value="dUTPase-like_sf"/>
</dbReference>
<dbReference type="InterPro" id="IPR033704">
    <property type="entry name" value="dUTPase_trimeric"/>
</dbReference>
<dbReference type="NCBIfam" id="TIGR02274">
    <property type="entry name" value="dCTP_deam"/>
    <property type="match status" value="1"/>
</dbReference>
<dbReference type="PANTHER" id="PTHR42680">
    <property type="entry name" value="DCTP DEAMINASE"/>
    <property type="match status" value="1"/>
</dbReference>
<dbReference type="PANTHER" id="PTHR42680:SF3">
    <property type="entry name" value="DCTP DEAMINASE"/>
    <property type="match status" value="1"/>
</dbReference>
<dbReference type="Pfam" id="PF22769">
    <property type="entry name" value="DCD"/>
    <property type="match status" value="1"/>
</dbReference>
<dbReference type="SUPFAM" id="SSF51283">
    <property type="entry name" value="dUTPase-like"/>
    <property type="match status" value="1"/>
</dbReference>
<proteinExistence type="inferred from homology"/>
<keyword id="KW-0378">Hydrolase</keyword>
<keyword id="KW-0546">Nucleotide metabolism</keyword>
<keyword id="KW-0547">Nucleotide-binding</keyword>
<accession>C0ZSY9</accession>
<reference key="1">
    <citation type="submission" date="2005-03" db="EMBL/GenBank/DDBJ databases">
        <title>Comparison of the complete genome sequences of Rhodococcus erythropolis PR4 and Rhodococcus opacus B4.</title>
        <authorList>
            <person name="Takarada H."/>
            <person name="Sekine M."/>
            <person name="Hosoyama A."/>
            <person name="Yamada R."/>
            <person name="Fujisawa T."/>
            <person name="Omata S."/>
            <person name="Shimizu A."/>
            <person name="Tsukatani N."/>
            <person name="Tanikawa S."/>
            <person name="Fujita N."/>
            <person name="Harayama S."/>
        </authorList>
    </citation>
    <scope>NUCLEOTIDE SEQUENCE [LARGE SCALE GENOMIC DNA]</scope>
    <source>
        <strain>PR4 / NBRC 100887</strain>
    </source>
</reference>
<comment type="function">
    <text evidence="1">Bifunctional enzyme that catalyzes both the deamination of dCTP to dUTP and the hydrolysis of dUTP to dUMP without releasing the toxic dUTP intermediate.</text>
</comment>
<comment type="catalytic activity">
    <reaction evidence="1">
        <text>dCTP + 2 H2O = dUMP + NH4(+) + diphosphate</text>
        <dbReference type="Rhea" id="RHEA:19205"/>
        <dbReference type="ChEBI" id="CHEBI:15377"/>
        <dbReference type="ChEBI" id="CHEBI:28938"/>
        <dbReference type="ChEBI" id="CHEBI:33019"/>
        <dbReference type="ChEBI" id="CHEBI:61481"/>
        <dbReference type="ChEBI" id="CHEBI:246422"/>
        <dbReference type="EC" id="3.5.4.30"/>
    </reaction>
</comment>
<comment type="pathway">
    <text evidence="1">Pyrimidine metabolism; dUMP biosynthesis; dUMP from dCTP: step 1/1.</text>
</comment>
<comment type="subunit">
    <text evidence="1">Homotrimer.</text>
</comment>
<comment type="similarity">
    <text evidence="1">Belongs to the dCTP deaminase family.</text>
</comment>